<name>TSAD_YERPG</name>
<sequence>MRVLGIETSCDETGIAVYDDKAGLLANQLYSQVKLHADYGGVVPELASRDHVRKTVPLIQAALKEANLSAKDIDAVAYTAGPGLVGALLVGATIGRALAFAWGVPAVPVHHMEGHLLAPMLEENAPEFPFVALLVSGGHTQLISVTGIGEYLLLGESVDDAAGEAFDKTAKLLGLDYPGGPMLSRMAQQGTVGRFTFPRPMTDRPGLDFSFSGLKTFAANTIRANGDDDQTRADIARAFEDAVVDTLAIKSKRALDQTGFKRLVIAGGVSANQTLRLKLADMMQKRGGEVFYARPEFCTDNGAMIAYAGMVRLRSNLNSELSVSVRPRWPLSELPKV</sequence>
<comment type="function">
    <text evidence="1">Required for the formation of a threonylcarbamoyl group on adenosine at position 37 (t(6)A37) in tRNAs that read codons beginning with adenine. Is involved in the transfer of the threonylcarbamoyl moiety of threonylcarbamoyl-AMP (TC-AMP) to the N6 group of A37, together with TsaE and TsaB. TsaD likely plays a direct catalytic role in this reaction.</text>
</comment>
<comment type="catalytic activity">
    <reaction evidence="1">
        <text>L-threonylcarbamoyladenylate + adenosine(37) in tRNA = N(6)-L-threonylcarbamoyladenosine(37) in tRNA + AMP + H(+)</text>
        <dbReference type="Rhea" id="RHEA:37059"/>
        <dbReference type="Rhea" id="RHEA-COMP:10162"/>
        <dbReference type="Rhea" id="RHEA-COMP:10163"/>
        <dbReference type="ChEBI" id="CHEBI:15378"/>
        <dbReference type="ChEBI" id="CHEBI:73682"/>
        <dbReference type="ChEBI" id="CHEBI:74411"/>
        <dbReference type="ChEBI" id="CHEBI:74418"/>
        <dbReference type="ChEBI" id="CHEBI:456215"/>
        <dbReference type="EC" id="2.3.1.234"/>
    </reaction>
</comment>
<comment type="cofactor">
    <cofactor evidence="1">
        <name>Fe(2+)</name>
        <dbReference type="ChEBI" id="CHEBI:29033"/>
    </cofactor>
    <text evidence="1">Binds 1 Fe(2+) ion per subunit.</text>
</comment>
<comment type="subcellular location">
    <subcellularLocation>
        <location evidence="1">Cytoplasm</location>
    </subcellularLocation>
</comment>
<comment type="similarity">
    <text evidence="1">Belongs to the KAE1 / TsaD family.</text>
</comment>
<evidence type="ECO:0000255" key="1">
    <source>
        <dbReference type="HAMAP-Rule" id="MF_01445"/>
    </source>
</evidence>
<accession>A9R7E3</accession>
<reference key="1">
    <citation type="journal article" date="2010" name="J. Bacteriol.">
        <title>Genome sequence of the deep-rooted Yersinia pestis strain Angola reveals new insights into the evolution and pangenome of the plague bacterium.</title>
        <authorList>
            <person name="Eppinger M."/>
            <person name="Worsham P.L."/>
            <person name="Nikolich M.P."/>
            <person name="Riley D.R."/>
            <person name="Sebastian Y."/>
            <person name="Mou S."/>
            <person name="Achtman M."/>
            <person name="Lindler L.E."/>
            <person name="Ravel J."/>
        </authorList>
    </citation>
    <scope>NUCLEOTIDE SEQUENCE [LARGE SCALE GENOMIC DNA]</scope>
    <source>
        <strain>Angola</strain>
    </source>
</reference>
<protein>
    <recommendedName>
        <fullName evidence="1">tRNA N6-adenosine threonylcarbamoyltransferase</fullName>
        <ecNumber evidence="1">2.3.1.234</ecNumber>
    </recommendedName>
    <alternativeName>
        <fullName evidence="1">N6-L-threonylcarbamoyladenine synthase</fullName>
        <shortName evidence="1">t(6)A synthase</shortName>
    </alternativeName>
    <alternativeName>
        <fullName evidence="1">t(6)A37 threonylcarbamoyladenosine biosynthesis protein TsaD</fullName>
    </alternativeName>
    <alternativeName>
        <fullName evidence="1">tRNA threonylcarbamoyladenosine biosynthesis protein TsaD</fullName>
    </alternativeName>
</protein>
<feature type="chain" id="PRO_1000146047" description="tRNA N6-adenosine threonylcarbamoyltransferase">
    <location>
        <begin position="1"/>
        <end position="337"/>
    </location>
</feature>
<feature type="binding site" evidence="1">
    <location>
        <position position="111"/>
    </location>
    <ligand>
        <name>Fe cation</name>
        <dbReference type="ChEBI" id="CHEBI:24875"/>
    </ligand>
</feature>
<feature type="binding site" evidence="1">
    <location>
        <position position="115"/>
    </location>
    <ligand>
        <name>Fe cation</name>
        <dbReference type="ChEBI" id="CHEBI:24875"/>
    </ligand>
</feature>
<feature type="binding site" evidence="1">
    <location>
        <begin position="134"/>
        <end position="138"/>
    </location>
    <ligand>
        <name>substrate</name>
    </ligand>
</feature>
<feature type="binding site" evidence="1">
    <location>
        <position position="167"/>
    </location>
    <ligand>
        <name>substrate</name>
    </ligand>
</feature>
<feature type="binding site" evidence="1">
    <location>
        <position position="180"/>
    </location>
    <ligand>
        <name>substrate</name>
    </ligand>
</feature>
<feature type="binding site" evidence="1">
    <location>
        <position position="272"/>
    </location>
    <ligand>
        <name>substrate</name>
    </ligand>
</feature>
<feature type="binding site" evidence="1">
    <location>
        <position position="300"/>
    </location>
    <ligand>
        <name>Fe cation</name>
        <dbReference type="ChEBI" id="CHEBI:24875"/>
    </ligand>
</feature>
<keyword id="KW-0012">Acyltransferase</keyword>
<keyword id="KW-0963">Cytoplasm</keyword>
<keyword id="KW-0408">Iron</keyword>
<keyword id="KW-0479">Metal-binding</keyword>
<keyword id="KW-0808">Transferase</keyword>
<keyword id="KW-0819">tRNA processing</keyword>
<organism>
    <name type="scientific">Yersinia pestis bv. Antiqua (strain Angola)</name>
    <dbReference type="NCBI Taxonomy" id="349746"/>
    <lineage>
        <taxon>Bacteria</taxon>
        <taxon>Pseudomonadati</taxon>
        <taxon>Pseudomonadota</taxon>
        <taxon>Gammaproteobacteria</taxon>
        <taxon>Enterobacterales</taxon>
        <taxon>Yersiniaceae</taxon>
        <taxon>Yersinia</taxon>
    </lineage>
</organism>
<dbReference type="EC" id="2.3.1.234" evidence="1"/>
<dbReference type="EMBL" id="CP000901">
    <property type="protein sequence ID" value="ABX85961.1"/>
    <property type="molecule type" value="Genomic_DNA"/>
</dbReference>
<dbReference type="RefSeq" id="WP_002212201.1">
    <property type="nucleotide sequence ID" value="NZ_CP009935.1"/>
</dbReference>
<dbReference type="SMR" id="A9R7E3"/>
<dbReference type="GeneID" id="57973978"/>
<dbReference type="KEGG" id="ypg:YpAngola_A0300"/>
<dbReference type="PATRIC" id="fig|349746.12.peg.1249"/>
<dbReference type="GO" id="GO:0005737">
    <property type="term" value="C:cytoplasm"/>
    <property type="evidence" value="ECO:0007669"/>
    <property type="project" value="UniProtKB-SubCell"/>
</dbReference>
<dbReference type="GO" id="GO:0005506">
    <property type="term" value="F:iron ion binding"/>
    <property type="evidence" value="ECO:0007669"/>
    <property type="project" value="UniProtKB-UniRule"/>
</dbReference>
<dbReference type="GO" id="GO:0061711">
    <property type="term" value="F:N(6)-L-threonylcarbamoyladenine synthase activity"/>
    <property type="evidence" value="ECO:0007669"/>
    <property type="project" value="UniProtKB-EC"/>
</dbReference>
<dbReference type="GO" id="GO:0002949">
    <property type="term" value="P:tRNA threonylcarbamoyladenosine modification"/>
    <property type="evidence" value="ECO:0007669"/>
    <property type="project" value="UniProtKB-UniRule"/>
</dbReference>
<dbReference type="CDD" id="cd24133">
    <property type="entry name" value="ASKHA_NBD_TsaD_bac"/>
    <property type="match status" value="1"/>
</dbReference>
<dbReference type="FunFam" id="3.30.420.40:FF:000031">
    <property type="entry name" value="tRNA N6-adenosine threonylcarbamoyltransferase"/>
    <property type="match status" value="1"/>
</dbReference>
<dbReference type="Gene3D" id="3.30.420.40">
    <property type="match status" value="2"/>
</dbReference>
<dbReference type="HAMAP" id="MF_01445">
    <property type="entry name" value="TsaD"/>
    <property type="match status" value="1"/>
</dbReference>
<dbReference type="InterPro" id="IPR043129">
    <property type="entry name" value="ATPase_NBD"/>
</dbReference>
<dbReference type="InterPro" id="IPR000905">
    <property type="entry name" value="Gcp-like_dom"/>
</dbReference>
<dbReference type="InterPro" id="IPR017861">
    <property type="entry name" value="KAE1/TsaD"/>
</dbReference>
<dbReference type="InterPro" id="IPR017860">
    <property type="entry name" value="Peptidase_M22_CS"/>
</dbReference>
<dbReference type="InterPro" id="IPR022450">
    <property type="entry name" value="TsaD"/>
</dbReference>
<dbReference type="NCBIfam" id="TIGR00329">
    <property type="entry name" value="gcp_kae1"/>
    <property type="match status" value="1"/>
</dbReference>
<dbReference type="NCBIfam" id="TIGR03723">
    <property type="entry name" value="T6A_TsaD_YgjD"/>
    <property type="match status" value="1"/>
</dbReference>
<dbReference type="PANTHER" id="PTHR11735">
    <property type="entry name" value="TRNA N6-ADENOSINE THREONYLCARBAMOYLTRANSFERASE"/>
    <property type="match status" value="1"/>
</dbReference>
<dbReference type="PANTHER" id="PTHR11735:SF6">
    <property type="entry name" value="TRNA N6-ADENOSINE THREONYLCARBAMOYLTRANSFERASE, MITOCHONDRIAL"/>
    <property type="match status" value="1"/>
</dbReference>
<dbReference type="Pfam" id="PF00814">
    <property type="entry name" value="TsaD"/>
    <property type="match status" value="1"/>
</dbReference>
<dbReference type="PRINTS" id="PR00789">
    <property type="entry name" value="OSIALOPTASE"/>
</dbReference>
<dbReference type="SUPFAM" id="SSF53067">
    <property type="entry name" value="Actin-like ATPase domain"/>
    <property type="match status" value="1"/>
</dbReference>
<dbReference type="PROSITE" id="PS01016">
    <property type="entry name" value="GLYCOPROTEASE"/>
    <property type="match status" value="1"/>
</dbReference>
<gene>
    <name evidence="1" type="primary">tsaD</name>
    <name type="synonym">gcp</name>
    <name type="ordered locus">YpAngola_A0300</name>
</gene>
<proteinExistence type="inferred from homology"/>